<evidence type="ECO:0000255" key="1">
    <source>
        <dbReference type="HAMAP-Rule" id="MF_00078"/>
    </source>
</evidence>
<evidence type="ECO:0000269" key="2">
    <source>
    </source>
</evidence>
<evidence type="ECO:0000303" key="3">
    <source>
    </source>
</evidence>
<evidence type="ECO:0000305" key="4"/>
<evidence type="ECO:0007744" key="5">
    <source>
        <dbReference type="PDB" id="7CNR"/>
    </source>
</evidence>
<evidence type="ECO:0007744" key="6">
    <source>
        <dbReference type="PDB" id="7CNS"/>
    </source>
</evidence>
<evidence type="ECO:0007829" key="7">
    <source>
        <dbReference type="PDB" id="7CNS"/>
    </source>
</evidence>
<comment type="function">
    <text evidence="1">Component of a hydro-lyase that catalyzes the dehydration of mevalonate 5-phosphate (MVA5P) to form trans-anhydromevalonate 5-phosphate (tAHMP). Involved in the archaeal mevalonate (MVA) pathway, which provides fundamental precursors for isoprenoid biosynthesis, such as isopentenyl diphosphate (IPP) and dimethylallyl diphosphate (DMAPP).</text>
</comment>
<comment type="catalytic activity">
    <reaction evidence="1">
        <text>(R)-5-phosphomevalonate = (2E)-3-methyl-5-phosphooxypent-2-enoate + H2O</text>
        <dbReference type="Rhea" id="RHEA:78975"/>
        <dbReference type="ChEBI" id="CHEBI:15377"/>
        <dbReference type="ChEBI" id="CHEBI:58146"/>
        <dbReference type="ChEBI" id="CHEBI:229665"/>
        <dbReference type="EC" id="4.2.1.182"/>
    </reaction>
    <physiologicalReaction direction="left-to-right" evidence="1">
        <dbReference type="Rhea" id="RHEA:78976"/>
    </physiologicalReaction>
</comment>
<comment type="pathway">
    <text evidence="1">Isoprenoid biosynthesis; isopentenyl diphosphate biosynthesis via mevalonate pathway.</text>
</comment>
<comment type="subunit">
    <text evidence="2">Heterodimer composed of a large subunit (PMDh-L) and a small subunit (PMDh-S).</text>
</comment>
<comment type="similarity">
    <text evidence="1 4">Belongs to the AcnX type II small subunit family.</text>
</comment>
<dbReference type="EC" id="4.2.1.182" evidence="1"/>
<dbReference type="EMBL" id="AP006878">
    <property type="protein sequence ID" value="BAD85437.1"/>
    <property type="molecule type" value="Genomic_DNA"/>
</dbReference>
<dbReference type="RefSeq" id="WP_011250199.1">
    <property type="nucleotide sequence ID" value="NC_006624.1"/>
</dbReference>
<dbReference type="PDB" id="7CNR">
    <property type="method" value="X-ray"/>
    <property type="resolution" value="3.39 A"/>
    <property type="chains" value="B/D/F/H=2-133"/>
</dbReference>
<dbReference type="PDB" id="7CNS">
    <property type="method" value="X-ray"/>
    <property type="resolution" value="1.90 A"/>
    <property type="chains" value="B=2-133"/>
</dbReference>
<dbReference type="PDBsum" id="7CNR"/>
<dbReference type="PDBsum" id="7CNS"/>
<dbReference type="SMR" id="Q5JGJ7"/>
<dbReference type="FunCoup" id="Q5JGJ7">
    <property type="interactions" value="11"/>
</dbReference>
<dbReference type="STRING" id="69014.TK1248"/>
<dbReference type="EnsemblBacteria" id="BAD85437">
    <property type="protein sequence ID" value="BAD85437"/>
    <property type="gene ID" value="TK1248"/>
</dbReference>
<dbReference type="GeneID" id="78447764"/>
<dbReference type="KEGG" id="tko:TK1248"/>
<dbReference type="PATRIC" id="fig|69014.16.peg.1221"/>
<dbReference type="eggNOG" id="arCOG04279">
    <property type="taxonomic scope" value="Archaea"/>
</dbReference>
<dbReference type="HOGENOM" id="CLU_141583_2_0_2"/>
<dbReference type="InParanoid" id="Q5JGJ7"/>
<dbReference type="OrthoDB" id="18062at2157"/>
<dbReference type="PhylomeDB" id="Q5JGJ7"/>
<dbReference type="UniPathway" id="UPA00057"/>
<dbReference type="Proteomes" id="UP000000536">
    <property type="component" value="Chromosome"/>
</dbReference>
<dbReference type="GO" id="GO:0016836">
    <property type="term" value="F:hydro-lyase activity"/>
    <property type="evidence" value="ECO:0007669"/>
    <property type="project" value="UniProtKB-UniRule"/>
</dbReference>
<dbReference type="GO" id="GO:0019287">
    <property type="term" value="P:isopentenyl diphosphate biosynthetic process, mevalonate pathway"/>
    <property type="evidence" value="ECO:0007669"/>
    <property type="project" value="UniProtKB-UniRule"/>
</dbReference>
<dbReference type="CDD" id="cd01356">
    <property type="entry name" value="AcnX_swivel"/>
    <property type="match status" value="1"/>
</dbReference>
<dbReference type="Gene3D" id="3.50.30.10">
    <property type="entry name" value="Phosphohistidine domain"/>
    <property type="match status" value="1"/>
</dbReference>
<dbReference type="HAMAP" id="MF_00078">
    <property type="entry name" value="PMDh_S"/>
    <property type="match status" value="1"/>
</dbReference>
<dbReference type="InterPro" id="IPR012016">
    <property type="entry name" value="PMDh-S-like"/>
</dbReference>
<dbReference type="InterPro" id="IPR002840">
    <property type="entry name" value="PMDh-S-like_dom"/>
</dbReference>
<dbReference type="InterPro" id="IPR020794">
    <property type="entry name" value="PMDh_S"/>
</dbReference>
<dbReference type="NCBIfam" id="NF003046">
    <property type="entry name" value="PRK03955.1"/>
    <property type="match status" value="1"/>
</dbReference>
<dbReference type="PANTHER" id="PTHR36577">
    <property type="entry name" value="DUF521 DOMAIN PROTEIN (AFU_ORTHOLOGUE AFUA_6G00490)"/>
    <property type="match status" value="1"/>
</dbReference>
<dbReference type="PANTHER" id="PTHR36577:SF3">
    <property type="entry name" value="DUF521 DOMAIN PROTEIN (AFU_ORTHOLOGUE AFUA_6G00490)"/>
    <property type="match status" value="1"/>
</dbReference>
<dbReference type="Pfam" id="PF01989">
    <property type="entry name" value="AcnX_swivel_put"/>
    <property type="match status" value="1"/>
</dbReference>
<dbReference type="PIRSF" id="PIRSF004966">
    <property type="entry name" value="UCP004966"/>
    <property type="match status" value="1"/>
</dbReference>
<dbReference type="SUPFAM" id="SSF52016">
    <property type="entry name" value="LeuD/IlvD-like"/>
    <property type="match status" value="1"/>
</dbReference>
<protein>
    <recommendedName>
        <fullName evidence="1">Phosphomevalonate dehydratase small subunit</fullName>
        <shortName evidence="1">PMDh small subunit</shortName>
        <shortName evidence="1">PMDh-S</shortName>
        <ecNumber evidence="1">4.2.1.182</ecNumber>
    </recommendedName>
    <alternativeName>
        <fullName evidence="3">AcnXType-II</fullName>
    </alternativeName>
    <alternativeName>
        <fullName evidence="3">Mevalonate 5-phosphate dehydratase small subunit</fullName>
        <shortName evidence="3">MVA5P dehydratase small subunit</shortName>
    </alternativeName>
    <alternativeName>
        <fullName evidence="3">TkAcnXS</fullName>
    </alternativeName>
</protein>
<organism>
    <name type="scientific">Thermococcus kodakarensis (strain ATCC BAA-918 / JCM 12380 / KOD1)</name>
    <name type="common">Pyrococcus kodakaraensis (strain KOD1)</name>
    <dbReference type="NCBI Taxonomy" id="69014"/>
    <lineage>
        <taxon>Archaea</taxon>
        <taxon>Methanobacteriati</taxon>
        <taxon>Methanobacteriota</taxon>
        <taxon>Thermococci</taxon>
        <taxon>Thermococcales</taxon>
        <taxon>Thermococcaceae</taxon>
        <taxon>Thermococcus</taxon>
    </lineage>
</organism>
<keyword id="KW-0002">3D-structure</keyword>
<keyword id="KW-0414">Isoprene biosynthesis</keyword>
<keyword id="KW-0456">Lyase</keyword>
<keyword id="KW-1185">Reference proteome</keyword>
<name>PMDHS_THEKO</name>
<feature type="chain" id="PRO_0000152572" description="Phosphomevalonate dehydratase small subunit">
    <location>
        <begin position="1"/>
        <end position="133"/>
    </location>
</feature>
<feature type="active site" description="Proton acceptor" evidence="1">
    <location>
        <position position="62"/>
    </location>
</feature>
<feature type="strand" evidence="7">
    <location>
        <begin position="2"/>
        <end position="4"/>
    </location>
</feature>
<feature type="strand" evidence="7">
    <location>
        <begin position="6"/>
        <end position="9"/>
    </location>
</feature>
<feature type="strand" evidence="7">
    <location>
        <begin position="12"/>
        <end position="19"/>
    </location>
</feature>
<feature type="helix" evidence="7">
    <location>
        <begin position="26"/>
        <end position="29"/>
    </location>
</feature>
<feature type="turn" evidence="7">
    <location>
        <begin position="32"/>
        <end position="34"/>
    </location>
</feature>
<feature type="turn" evidence="7">
    <location>
        <begin position="43"/>
        <end position="46"/>
    </location>
</feature>
<feature type="strand" evidence="7">
    <location>
        <begin position="52"/>
        <end position="59"/>
    </location>
</feature>
<feature type="helix" evidence="7">
    <location>
        <begin position="65"/>
        <end position="74"/>
    </location>
</feature>
<feature type="strand" evidence="7">
    <location>
        <begin position="80"/>
        <end position="86"/>
    </location>
</feature>
<feature type="helix" evidence="7">
    <location>
        <begin position="89"/>
        <end position="98"/>
    </location>
</feature>
<feature type="strand" evidence="7">
    <location>
        <begin position="102"/>
        <end position="105"/>
    </location>
</feature>
<feature type="helix" evidence="7">
    <location>
        <begin position="108"/>
        <end position="110"/>
    </location>
</feature>
<feature type="strand" evidence="7">
    <location>
        <begin position="116"/>
        <end position="120"/>
    </location>
</feature>
<feature type="turn" evidence="7">
    <location>
        <begin position="121"/>
        <end position="124"/>
    </location>
</feature>
<feature type="strand" evidence="7">
    <location>
        <begin position="125"/>
        <end position="129"/>
    </location>
</feature>
<gene>
    <name type="ordered locus">TK1248</name>
</gene>
<reference key="1">
    <citation type="journal article" date="2005" name="Genome Res.">
        <title>Complete genome sequence of the hyperthermophilic archaeon Thermococcus kodakaraensis KOD1 and comparison with Pyrococcus genomes.</title>
        <authorList>
            <person name="Fukui T."/>
            <person name="Atomi H."/>
            <person name="Kanai T."/>
            <person name="Matsumi R."/>
            <person name="Fujiwara S."/>
            <person name="Imanaka T."/>
        </authorList>
    </citation>
    <scope>NUCLEOTIDE SEQUENCE [LARGE SCALE GENOMIC DNA]</scope>
    <source>
        <strain>ATCC BAA-918 / JCM 12380 / KOD1</strain>
    </source>
</reference>
<reference evidence="5 6" key="2">
    <citation type="journal article" date="2021" name="Commun. Biol.">
        <title>Crystal structures of aconitase X enzymes from bacteria and archaea provide insights into the molecular evolution of the aconitase superfamily.</title>
        <authorList>
            <person name="Watanabe S."/>
            <person name="Murase Y."/>
            <person name="Watanabe Y."/>
            <person name="Sakurai Y."/>
            <person name="Tajima K."/>
        </authorList>
    </citation>
    <scope>X-RAY CRYSTALLOGRAPHY (1.90 ANGSTROMS) OF 2-133</scope>
    <scope>SUBUNIT</scope>
</reference>
<sequence>MKLKGRKIVGGKAEGEVIVSRKPLSFLGGVDPETGIVTDAESDIRGQSIAGKILVFPRGKGSTVGSYVIYALKKNNKAPKAIIVGEAETIVATGAIISDIPMVDGVDVSKLKTGMKVRVDADSGEVEILEDGE</sequence>
<proteinExistence type="evidence at protein level"/>
<accession>Q5JGJ7</accession>